<sequence>MLDAFAKVVAQADARGEFLSNVQLDGLSAMVADGNKRLDAVNAINSNASSIVTSAARALFAEQPQLIQPGGNAYTNRRMAACLRDMEIILRYVSYAAIAGDSSVLDDRCLNGLKETYQALGTPGASVAAGVQKMKEAAIAVANDSSNVTVGDCSALMAEIASYFDRAAAAVA</sequence>
<gene>
    <name type="primary">cpcB</name>
</gene>
<protein>
    <recommendedName>
        <fullName>C-phycocyanin beta chain</fullName>
    </recommendedName>
</protein>
<feature type="chain" id="PRO_0000199154" description="C-phycocyanin beta chain">
    <location>
        <begin position="1"/>
        <end position="172"/>
    </location>
</feature>
<feature type="binding site" description="covalent" evidence="2">
    <location>
        <position position="82"/>
    </location>
    <ligand>
        <name>(2R,3E)-phycocyanobilin</name>
        <dbReference type="ChEBI" id="CHEBI:85275"/>
        <label>1</label>
    </ligand>
</feature>
<feature type="binding site" description="covalent" evidence="2">
    <location>
        <position position="153"/>
    </location>
    <ligand>
        <name>(2R,3E)-phycocyanobilin</name>
        <dbReference type="ChEBI" id="CHEBI:85275"/>
        <label>2</label>
    </ligand>
</feature>
<feature type="modified residue" description="N4-methylasparagine" evidence="2">
    <location>
        <position position="72"/>
    </location>
</feature>
<name>PHCB_RHOVL</name>
<comment type="function">
    <text>Light-harvesting photosynthetic bile pigment-protein from the phycobiliprotein complex (phycobilisome, PBS). Phycocyanin is the major phycobiliprotein in the PBS rod.</text>
</comment>
<comment type="subunit">
    <text evidence="2">Heterodimer of an alpha and a beta subunit, which further assembles into trimers and the trimers into hexamers. The basic functional unit of phycobiliproteins is a ring-shaped hexamer formed from two back-to-back trimers contacting via the alpha chain subunits. The trimers are composed of alpha/beta subunit heterodimers arranged around a three-fold axis of symmetry. The phycoerythrins also contain a gamma subunit which is located in the center of the hexamer.</text>
</comment>
<comment type="subcellular location">
    <subcellularLocation>
        <location evidence="1">Plastid</location>
        <location evidence="1">Chloroplast thylakoid membrane</location>
        <topology evidence="1">Peripheral membrane protein</topology>
        <orientation evidence="1">Stromal side</orientation>
    </subcellularLocation>
    <text evidence="1">Part of the phycobilisome rod.</text>
</comment>
<comment type="PTM">
    <text evidence="2">Contains two covalently linked bilin chromophores.</text>
</comment>
<comment type="similarity">
    <text evidence="3">Belongs to the phycobiliprotein family.</text>
</comment>
<proteinExistence type="inferred from homology"/>
<evidence type="ECO:0000250" key="1"/>
<evidence type="ECO:0000250" key="2">
    <source>
        <dbReference type="UniProtKB" id="P00311"/>
    </source>
</evidence>
<evidence type="ECO:0000305" key="3"/>
<geneLocation type="chloroplast"/>
<reference key="1">
    <citation type="online journal article" date="1995" name="Plant Gene Register">
        <title>Cloning and sequence analysis of the genes encoding the a and b subunits of C-phycocyanin from the red alga Rhodella violacea.</title>
        <authorList>
            <person name="Garnier F."/>
            <person name="Richaud C."/>
            <person name="Bernard C."/>
        </authorList>
        <locator>PGR95-101</locator>
    </citation>
    <scope>NUCLEOTIDE SEQUENCE [GENOMIC DNA]</scope>
</reference>
<keyword id="KW-0042">Antenna complex</keyword>
<keyword id="KW-0089">Bile pigment</keyword>
<keyword id="KW-0150">Chloroplast</keyword>
<keyword id="KW-0157">Chromophore</keyword>
<keyword id="KW-0249">Electron transport</keyword>
<keyword id="KW-0472">Membrane</keyword>
<keyword id="KW-0488">Methylation</keyword>
<keyword id="KW-0602">Photosynthesis</keyword>
<keyword id="KW-0605">Phycobilisome</keyword>
<keyword id="KW-0934">Plastid</keyword>
<keyword id="KW-0793">Thylakoid</keyword>
<keyword id="KW-0813">Transport</keyword>
<dbReference type="EMBL" id="Z48165">
    <property type="protein sequence ID" value="CAA88177.1"/>
    <property type="molecule type" value="Genomic_DNA"/>
</dbReference>
<dbReference type="RefSeq" id="YP_010330394.1">
    <property type="nucleotide sequence ID" value="NC_062301.1"/>
</dbReference>
<dbReference type="SMR" id="Q36698"/>
<dbReference type="GeneID" id="71712857"/>
<dbReference type="GO" id="GO:0009535">
    <property type="term" value="C:chloroplast thylakoid membrane"/>
    <property type="evidence" value="ECO:0007669"/>
    <property type="project" value="UniProtKB-SubCell"/>
</dbReference>
<dbReference type="GO" id="GO:0030089">
    <property type="term" value="C:phycobilisome"/>
    <property type="evidence" value="ECO:0007669"/>
    <property type="project" value="UniProtKB-KW"/>
</dbReference>
<dbReference type="GO" id="GO:0015979">
    <property type="term" value="P:photosynthesis"/>
    <property type="evidence" value="ECO:0007669"/>
    <property type="project" value="UniProtKB-KW"/>
</dbReference>
<dbReference type="CDD" id="cd14768">
    <property type="entry name" value="PC_PEC_beta"/>
    <property type="match status" value="1"/>
</dbReference>
<dbReference type="Gene3D" id="1.10.490.20">
    <property type="entry name" value="Phycocyanins"/>
    <property type="match status" value="1"/>
</dbReference>
<dbReference type="InterPro" id="IPR009050">
    <property type="entry name" value="Globin-like_sf"/>
</dbReference>
<dbReference type="InterPro" id="IPR012128">
    <property type="entry name" value="Phycobilisome_asu/bsu"/>
</dbReference>
<dbReference type="InterPro" id="IPR038719">
    <property type="entry name" value="Phycobilisome_asu/bsu_sf"/>
</dbReference>
<dbReference type="InterPro" id="IPR006247">
    <property type="entry name" value="Phycocyanin_b"/>
</dbReference>
<dbReference type="NCBIfam" id="TIGR01339">
    <property type="entry name" value="phycocy_beta"/>
    <property type="match status" value="1"/>
</dbReference>
<dbReference type="PANTHER" id="PTHR34011:SF7">
    <property type="entry name" value="C-PHYCOCYANIN BETA SUBUNIT"/>
    <property type="match status" value="1"/>
</dbReference>
<dbReference type="PANTHER" id="PTHR34011">
    <property type="entry name" value="PHYCOBILISOME 32.1 KDA LINKER POLYPEPTIDE, PHYCOCYANIN-ASSOCIATED, ROD 2-RELATED"/>
    <property type="match status" value="1"/>
</dbReference>
<dbReference type="Pfam" id="PF00502">
    <property type="entry name" value="Phycobilisome"/>
    <property type="match status" value="1"/>
</dbReference>
<dbReference type="PIRSF" id="PIRSF000081">
    <property type="entry name" value="Phycocyanin"/>
    <property type="match status" value="1"/>
</dbReference>
<dbReference type="SUPFAM" id="SSF46458">
    <property type="entry name" value="Globin-like"/>
    <property type="match status" value="1"/>
</dbReference>
<accession>Q36698</accession>
<organism>
    <name type="scientific">Rhodella violacea</name>
    <name type="common">Red alga</name>
    <dbReference type="NCBI Taxonomy" id="2801"/>
    <lineage>
        <taxon>Eukaryota</taxon>
        <taxon>Rhodophyta</taxon>
        <taxon>Rhodellophyceae</taxon>
        <taxon>Rhodellales</taxon>
        <taxon>Rhodellaceae</taxon>
        <taxon>Rhodella</taxon>
    </lineage>
</organism>